<evidence type="ECO:0000255" key="1">
    <source>
        <dbReference type="HAMAP-Rule" id="MF_00185"/>
    </source>
</evidence>
<comment type="function">
    <text evidence="1">Catalyzes the transfer of a dimethylallyl group onto the adenine at position 37 in tRNAs that read codons beginning with uridine, leading to the formation of N6-(dimethylallyl)adenosine (i(6)A).</text>
</comment>
<comment type="catalytic activity">
    <reaction evidence="1">
        <text>adenosine(37) in tRNA + dimethylallyl diphosphate = N(6)-dimethylallyladenosine(37) in tRNA + diphosphate</text>
        <dbReference type="Rhea" id="RHEA:26482"/>
        <dbReference type="Rhea" id="RHEA-COMP:10162"/>
        <dbReference type="Rhea" id="RHEA-COMP:10375"/>
        <dbReference type="ChEBI" id="CHEBI:33019"/>
        <dbReference type="ChEBI" id="CHEBI:57623"/>
        <dbReference type="ChEBI" id="CHEBI:74411"/>
        <dbReference type="ChEBI" id="CHEBI:74415"/>
        <dbReference type="EC" id="2.5.1.75"/>
    </reaction>
</comment>
<comment type="cofactor">
    <cofactor evidence="1">
        <name>Mg(2+)</name>
        <dbReference type="ChEBI" id="CHEBI:18420"/>
    </cofactor>
</comment>
<comment type="subunit">
    <text evidence="1">Monomer.</text>
</comment>
<comment type="similarity">
    <text evidence="1">Belongs to the IPP transferase family.</text>
</comment>
<sequence>MNKNKPFIVVIVGPTASGKTELSIELAKRINGEIISGDSMQVYKHMNIGTAKVTPEEMDGIPHHLIDILNPDDTFSAYEFKRLAEDLITDITNRGKVPIIAGGTGLYIQSLIYNYELEDETVTPAQLSIVKQKLSALEHLDNQQLHDYLAQFDAVSAENIHPNNRQRVLRAIEYYLKTKKLLSNRKKVQQFTENYDTLLLGIEMSRKTLYSRINKRVDIMLDHGLFREVQQLVEQGYESCQSMQAIGYKELIPVINGQMIYEDAVNDLKQHSRQYAKRQMTWFKNKMSVHWLDKENMSLQMMLDEITTQIK</sequence>
<accession>Q2FHD6</accession>
<proteinExistence type="inferred from homology"/>
<reference key="1">
    <citation type="journal article" date="2006" name="Lancet">
        <title>Complete genome sequence of USA300, an epidemic clone of community-acquired meticillin-resistant Staphylococcus aureus.</title>
        <authorList>
            <person name="Diep B.A."/>
            <person name="Gill S.R."/>
            <person name="Chang R.F."/>
            <person name="Phan T.H."/>
            <person name="Chen J.H."/>
            <person name="Davidson M.G."/>
            <person name="Lin F."/>
            <person name="Lin J."/>
            <person name="Carleton H.A."/>
            <person name="Mongodin E.F."/>
            <person name="Sensabaugh G.F."/>
            <person name="Perdreau-Remington F."/>
        </authorList>
    </citation>
    <scope>NUCLEOTIDE SEQUENCE [LARGE SCALE GENOMIC DNA]</scope>
    <source>
        <strain>USA300</strain>
    </source>
</reference>
<dbReference type="EC" id="2.5.1.75" evidence="1"/>
<dbReference type="EMBL" id="CP000255">
    <property type="protein sequence ID" value="ABD21910.1"/>
    <property type="molecule type" value="Genomic_DNA"/>
</dbReference>
<dbReference type="RefSeq" id="WP_001548613.1">
    <property type="nucleotide sequence ID" value="NZ_CP027476.1"/>
</dbReference>
<dbReference type="SMR" id="Q2FHD6"/>
<dbReference type="KEGG" id="saa:SAUSA300_1195"/>
<dbReference type="HOGENOM" id="CLU_032616_0_1_9"/>
<dbReference type="OMA" id="VPHYLID"/>
<dbReference type="Proteomes" id="UP000001939">
    <property type="component" value="Chromosome"/>
</dbReference>
<dbReference type="GO" id="GO:0005524">
    <property type="term" value="F:ATP binding"/>
    <property type="evidence" value="ECO:0007669"/>
    <property type="project" value="UniProtKB-UniRule"/>
</dbReference>
<dbReference type="GO" id="GO:0052381">
    <property type="term" value="F:tRNA dimethylallyltransferase activity"/>
    <property type="evidence" value="ECO:0007669"/>
    <property type="project" value="UniProtKB-UniRule"/>
</dbReference>
<dbReference type="GO" id="GO:0006400">
    <property type="term" value="P:tRNA modification"/>
    <property type="evidence" value="ECO:0007669"/>
    <property type="project" value="TreeGrafter"/>
</dbReference>
<dbReference type="FunFam" id="1.10.20.140:FF:000004">
    <property type="entry name" value="tRNA dimethylallyltransferase"/>
    <property type="match status" value="1"/>
</dbReference>
<dbReference type="Gene3D" id="1.10.20.140">
    <property type="match status" value="1"/>
</dbReference>
<dbReference type="Gene3D" id="3.40.50.300">
    <property type="entry name" value="P-loop containing nucleotide triphosphate hydrolases"/>
    <property type="match status" value="1"/>
</dbReference>
<dbReference type="HAMAP" id="MF_00185">
    <property type="entry name" value="IPP_trans"/>
    <property type="match status" value="1"/>
</dbReference>
<dbReference type="InterPro" id="IPR039657">
    <property type="entry name" value="Dimethylallyltransferase"/>
</dbReference>
<dbReference type="InterPro" id="IPR018022">
    <property type="entry name" value="IPT"/>
</dbReference>
<dbReference type="InterPro" id="IPR027417">
    <property type="entry name" value="P-loop_NTPase"/>
</dbReference>
<dbReference type="NCBIfam" id="TIGR00174">
    <property type="entry name" value="miaA"/>
    <property type="match status" value="1"/>
</dbReference>
<dbReference type="PANTHER" id="PTHR11088">
    <property type="entry name" value="TRNA DIMETHYLALLYLTRANSFERASE"/>
    <property type="match status" value="1"/>
</dbReference>
<dbReference type="PANTHER" id="PTHR11088:SF60">
    <property type="entry name" value="TRNA DIMETHYLALLYLTRANSFERASE"/>
    <property type="match status" value="1"/>
</dbReference>
<dbReference type="Pfam" id="PF01715">
    <property type="entry name" value="IPPT"/>
    <property type="match status" value="1"/>
</dbReference>
<dbReference type="SUPFAM" id="SSF52540">
    <property type="entry name" value="P-loop containing nucleoside triphosphate hydrolases"/>
    <property type="match status" value="2"/>
</dbReference>
<name>MIAA_STAA3</name>
<protein>
    <recommendedName>
        <fullName evidence="1">tRNA dimethylallyltransferase</fullName>
        <ecNumber evidence="1">2.5.1.75</ecNumber>
    </recommendedName>
    <alternativeName>
        <fullName evidence="1">Dimethylallyl diphosphate:tRNA dimethylallyltransferase</fullName>
        <shortName evidence="1">DMAPP:tRNA dimethylallyltransferase</shortName>
        <shortName evidence="1">DMATase</shortName>
    </alternativeName>
    <alternativeName>
        <fullName evidence="1">Isopentenyl-diphosphate:tRNA isopentenyltransferase</fullName>
        <shortName evidence="1">IPP transferase</shortName>
        <shortName evidence="1">IPPT</shortName>
        <shortName evidence="1">IPTase</shortName>
    </alternativeName>
</protein>
<organism>
    <name type="scientific">Staphylococcus aureus (strain USA300)</name>
    <dbReference type="NCBI Taxonomy" id="367830"/>
    <lineage>
        <taxon>Bacteria</taxon>
        <taxon>Bacillati</taxon>
        <taxon>Bacillota</taxon>
        <taxon>Bacilli</taxon>
        <taxon>Bacillales</taxon>
        <taxon>Staphylococcaceae</taxon>
        <taxon>Staphylococcus</taxon>
    </lineage>
</organism>
<gene>
    <name evidence="1" type="primary">miaA</name>
    <name type="ordered locus">SAUSA300_1195</name>
</gene>
<keyword id="KW-0067">ATP-binding</keyword>
<keyword id="KW-0460">Magnesium</keyword>
<keyword id="KW-0547">Nucleotide-binding</keyword>
<keyword id="KW-0808">Transferase</keyword>
<keyword id="KW-0819">tRNA processing</keyword>
<feature type="chain" id="PRO_1000020663" description="tRNA dimethylallyltransferase">
    <location>
        <begin position="1"/>
        <end position="311"/>
    </location>
</feature>
<feature type="region of interest" description="Interaction with substrate tRNA" evidence="1">
    <location>
        <begin position="38"/>
        <end position="41"/>
    </location>
</feature>
<feature type="region of interest" description="Interaction with substrate tRNA" evidence="1">
    <location>
        <begin position="166"/>
        <end position="170"/>
    </location>
</feature>
<feature type="binding site" evidence="1">
    <location>
        <begin position="13"/>
        <end position="20"/>
    </location>
    <ligand>
        <name>ATP</name>
        <dbReference type="ChEBI" id="CHEBI:30616"/>
    </ligand>
</feature>
<feature type="binding site" evidence="1">
    <location>
        <begin position="15"/>
        <end position="20"/>
    </location>
    <ligand>
        <name>substrate</name>
    </ligand>
</feature>
<feature type="site" description="Interaction with substrate tRNA" evidence="1">
    <location>
        <position position="104"/>
    </location>
</feature>